<reference key="1">
    <citation type="journal article" date="1998" name="DNA Res.">
        <title>Complete sequence and gene organization of the genome of a hyper-thermophilic archaebacterium, Pyrococcus horikoshii OT3.</title>
        <authorList>
            <person name="Kawarabayasi Y."/>
            <person name="Sawada M."/>
            <person name="Horikawa H."/>
            <person name="Haikawa Y."/>
            <person name="Hino Y."/>
            <person name="Yamamoto S."/>
            <person name="Sekine M."/>
            <person name="Baba S."/>
            <person name="Kosugi H."/>
            <person name="Hosoyama A."/>
            <person name="Nagai Y."/>
            <person name="Sakai M."/>
            <person name="Ogura K."/>
            <person name="Otsuka R."/>
            <person name="Nakazawa H."/>
            <person name="Takamiya M."/>
            <person name="Ohfuku Y."/>
            <person name="Funahashi T."/>
            <person name="Tanaka T."/>
            <person name="Kudoh Y."/>
            <person name="Yamazaki J."/>
            <person name="Kushida N."/>
            <person name="Oguchi A."/>
            <person name="Aoki K."/>
            <person name="Yoshizawa T."/>
            <person name="Nakamura Y."/>
            <person name="Robb F.T."/>
            <person name="Horikoshi K."/>
            <person name="Masuchi Y."/>
            <person name="Shizuya H."/>
            <person name="Kikuchi H."/>
        </authorList>
    </citation>
    <scope>NUCLEOTIDE SEQUENCE [LARGE SCALE GENOMIC DNA]</scope>
    <source>
        <strain>ATCC 700860 / DSM 12428 / JCM 9974 / NBRC 100139 / OT-3</strain>
    </source>
</reference>
<reference key="2">
    <citation type="journal article" date="2007" name="FEBS J.">
        <title>Molecular basis for the subunit assembly of the primase from an archaeon Pyrococcus horikoshii.</title>
        <authorList>
            <person name="Ito N."/>
            <person name="Matsui I."/>
            <person name="Matsui E."/>
        </authorList>
    </citation>
    <scope>X-RAY CRYSTALLOGRAPHY (2.9 ANGSTROMS) OF 1-219</scope>
    <scope>SUBUNIT</scope>
    <scope>MUTAGENESIS OF 155-TYR--ILE-157</scope>
</reference>
<proteinExistence type="evidence at protein level"/>
<sequence>MLDPFSEKAKELLKGFGSINDFMDAIPKIVSVDDVIERIRVVKNEKLIDKFLDQDNVMDLAQFYALLGALSYSPYGIELELVKKANLIIYSERLKRKKEIKPEEISIDVSTAIEFPTEDVRKIERVYGKIPEYTMKISDFLDLVPDEKLANYYIYEGRVYLKREDLIRIWSKAFERNVERGVNMLYEIRDELPEFYRKVLGEIQAFAEEEFGRKFGEIQGGKLRPEFFPPCIKNALKGVPQGIRNYAITVLLTSFLSYARICPNPPRRNVRVKDCIKDIRVITEEILPIIIEAANRCSPPLFEDQPNEIKNIWYHLGFGYTANPSLEDSGNSTWYFPPNCEKIRANAPQLCTPDKHCKYIRNPLTYYLRRLYLEGRRNAPKRGNKRGKKELLHQ</sequence>
<keyword id="KW-0002">3D-structure</keyword>
<keyword id="KW-0004">4Fe-4S</keyword>
<keyword id="KW-0235">DNA replication</keyword>
<keyword id="KW-0408">Iron</keyword>
<keyword id="KW-0411">Iron-sulfur</keyword>
<keyword id="KW-0479">Metal-binding</keyword>
<keyword id="KW-0639">Primosome</keyword>
<accession>O57935</accession>
<feature type="chain" id="PRO_0000046786" description="DNA primase large subunit PriL">
    <location>
        <begin position="1"/>
        <end position="394"/>
    </location>
</feature>
<feature type="binding site" evidence="1">
    <location>
        <position position="231"/>
    </location>
    <ligand>
        <name>[4Fe-4S] cluster</name>
        <dbReference type="ChEBI" id="CHEBI:49883"/>
    </ligand>
</feature>
<feature type="binding site" evidence="1">
    <location>
        <position position="340"/>
    </location>
    <ligand>
        <name>[4Fe-4S] cluster</name>
        <dbReference type="ChEBI" id="CHEBI:49883"/>
    </ligand>
</feature>
<feature type="binding site" evidence="1">
    <location>
        <position position="351"/>
    </location>
    <ligand>
        <name>[4Fe-4S] cluster</name>
        <dbReference type="ChEBI" id="CHEBI:49883"/>
    </ligand>
</feature>
<feature type="binding site" evidence="1">
    <location>
        <position position="357"/>
    </location>
    <ligand>
        <name>[4Fe-4S] cluster</name>
        <dbReference type="ChEBI" id="CHEBI:49883"/>
    </ligand>
</feature>
<feature type="mutagenesis site" description="1000-fold decrease in PriS binding." evidence="2">
    <original>YEG</original>
    <variation>AAA</variation>
    <location>
        <begin position="155"/>
        <end position="157"/>
    </location>
</feature>
<feature type="helix" evidence="4">
    <location>
        <begin position="7"/>
        <end position="12"/>
    </location>
</feature>
<feature type="turn" evidence="4">
    <location>
        <begin position="13"/>
        <end position="16"/>
    </location>
</feature>
<feature type="helix" evidence="4">
    <location>
        <begin position="19"/>
        <end position="25"/>
    </location>
</feature>
<feature type="helix" evidence="4">
    <location>
        <begin position="26"/>
        <end position="28"/>
    </location>
</feature>
<feature type="helix" evidence="4">
    <location>
        <begin position="32"/>
        <end position="39"/>
    </location>
</feature>
<feature type="helix" evidence="4">
    <location>
        <begin position="40"/>
        <end position="42"/>
    </location>
</feature>
<feature type="helix" evidence="4">
    <location>
        <begin position="45"/>
        <end position="47"/>
    </location>
</feature>
<feature type="helix" evidence="4">
    <location>
        <begin position="49"/>
        <end position="52"/>
    </location>
</feature>
<feature type="helix" evidence="4">
    <location>
        <begin position="56"/>
        <end position="70"/>
    </location>
</feature>
<feature type="helix" evidence="4">
    <location>
        <begin position="77"/>
        <end position="94"/>
    </location>
</feature>
<feature type="turn" evidence="4">
    <location>
        <begin position="102"/>
        <end position="104"/>
    </location>
</feature>
<feature type="strand" evidence="4">
    <location>
        <begin position="105"/>
        <end position="111"/>
    </location>
</feature>
<feature type="helix" evidence="4">
    <location>
        <begin position="117"/>
        <end position="119"/>
    </location>
</feature>
<feature type="helix" evidence="4">
    <location>
        <begin position="120"/>
        <end position="127"/>
    </location>
</feature>
<feature type="strand" evidence="4">
    <location>
        <begin position="133"/>
        <end position="136"/>
    </location>
</feature>
<feature type="helix" evidence="4">
    <location>
        <begin position="137"/>
        <end position="143"/>
    </location>
</feature>
<feature type="helix" evidence="4">
    <location>
        <begin position="149"/>
        <end position="151"/>
    </location>
</feature>
<feature type="strand" evidence="4">
    <location>
        <begin position="152"/>
        <end position="155"/>
    </location>
</feature>
<feature type="strand" evidence="4">
    <location>
        <begin position="158"/>
        <end position="161"/>
    </location>
</feature>
<feature type="helix" evidence="4">
    <location>
        <begin position="163"/>
        <end position="184"/>
    </location>
</feature>
<feature type="strand" evidence="4">
    <location>
        <begin position="186"/>
        <end position="188"/>
    </location>
</feature>
<feature type="helix" evidence="4">
    <location>
        <begin position="194"/>
        <end position="216"/>
    </location>
</feature>
<dbReference type="EMBL" id="BA000001">
    <property type="protein sequence ID" value="BAA29265.1"/>
    <property type="status" value="ALT_INIT"/>
    <property type="molecule type" value="Genomic_DNA"/>
</dbReference>
<dbReference type="PIR" id="B71242">
    <property type="entry name" value="B71242"/>
</dbReference>
<dbReference type="RefSeq" id="WP_048053055.1">
    <property type="nucleotide sequence ID" value="NC_000961.1"/>
</dbReference>
<dbReference type="PDB" id="2DLA">
    <property type="method" value="X-ray"/>
    <property type="resolution" value="2.90 A"/>
    <property type="chains" value="A/B/C=1-219"/>
</dbReference>
<dbReference type="PDBsum" id="2DLA"/>
<dbReference type="SMR" id="O57935"/>
<dbReference type="STRING" id="70601.gene:9377106"/>
<dbReference type="DNASU" id="1444087"/>
<dbReference type="EnsemblBacteria" id="BAA29265">
    <property type="protein sequence ID" value="BAA29265"/>
    <property type="gene ID" value="BAA29265"/>
</dbReference>
<dbReference type="GeneID" id="1444087"/>
<dbReference type="KEGG" id="pho:PH0196"/>
<dbReference type="eggNOG" id="arCOG03013">
    <property type="taxonomic scope" value="Archaea"/>
</dbReference>
<dbReference type="OrthoDB" id="46081at2157"/>
<dbReference type="BRENDA" id="2.7.7.102">
    <property type="organism ID" value="5244"/>
</dbReference>
<dbReference type="BRENDA" id="2.7.7.B16">
    <property type="organism ID" value="5244"/>
</dbReference>
<dbReference type="EvolutionaryTrace" id="O57935"/>
<dbReference type="Proteomes" id="UP000000752">
    <property type="component" value="Chromosome"/>
</dbReference>
<dbReference type="GO" id="GO:1990077">
    <property type="term" value="C:primosome complex"/>
    <property type="evidence" value="ECO:0007669"/>
    <property type="project" value="UniProtKB-KW"/>
</dbReference>
<dbReference type="GO" id="GO:0051539">
    <property type="term" value="F:4 iron, 4 sulfur cluster binding"/>
    <property type="evidence" value="ECO:0007669"/>
    <property type="project" value="UniProtKB-UniRule"/>
</dbReference>
<dbReference type="GO" id="GO:0003899">
    <property type="term" value="F:DNA-directed RNA polymerase activity"/>
    <property type="evidence" value="ECO:0007669"/>
    <property type="project" value="InterPro"/>
</dbReference>
<dbReference type="GO" id="GO:0046872">
    <property type="term" value="F:metal ion binding"/>
    <property type="evidence" value="ECO:0007669"/>
    <property type="project" value="UniProtKB-KW"/>
</dbReference>
<dbReference type="GO" id="GO:0006269">
    <property type="term" value="P:DNA replication, synthesis of primer"/>
    <property type="evidence" value="ECO:0007669"/>
    <property type="project" value="UniProtKB-UniRule"/>
</dbReference>
<dbReference type="CDD" id="cd06560">
    <property type="entry name" value="PriL"/>
    <property type="match status" value="1"/>
</dbReference>
<dbReference type="Gene3D" id="1.20.930.50">
    <property type="match status" value="1"/>
</dbReference>
<dbReference type="Gene3D" id="3.30.200.260">
    <property type="match status" value="1"/>
</dbReference>
<dbReference type="HAMAP" id="MF_00701">
    <property type="entry name" value="DNA_primase_lrg_arc"/>
    <property type="match status" value="1"/>
</dbReference>
<dbReference type="InterPro" id="IPR007238">
    <property type="entry name" value="DNA_primase_lsu_euk/arc"/>
</dbReference>
<dbReference type="InterPro" id="IPR023642">
    <property type="entry name" value="DNA_primase_lsu_PriL"/>
</dbReference>
<dbReference type="NCBIfam" id="NF003051">
    <property type="entry name" value="PRK03968.1"/>
    <property type="match status" value="1"/>
</dbReference>
<dbReference type="Pfam" id="PF04104">
    <property type="entry name" value="DNA_primase_lrg"/>
    <property type="match status" value="1"/>
</dbReference>
<dbReference type="SUPFAM" id="SSF140914">
    <property type="entry name" value="PriB N-terminal domain-like"/>
    <property type="match status" value="1"/>
</dbReference>
<evidence type="ECO:0000255" key="1">
    <source>
        <dbReference type="HAMAP-Rule" id="MF_00701"/>
    </source>
</evidence>
<evidence type="ECO:0000269" key="2">
    <source>
    </source>
</evidence>
<evidence type="ECO:0000305" key="3"/>
<evidence type="ECO:0007829" key="4">
    <source>
        <dbReference type="PDB" id="2DLA"/>
    </source>
</evidence>
<organism>
    <name type="scientific">Pyrococcus horikoshii (strain ATCC 700860 / DSM 12428 / JCM 9974 / NBRC 100139 / OT-3)</name>
    <dbReference type="NCBI Taxonomy" id="70601"/>
    <lineage>
        <taxon>Archaea</taxon>
        <taxon>Methanobacteriati</taxon>
        <taxon>Methanobacteriota</taxon>
        <taxon>Thermococci</taxon>
        <taxon>Thermococcales</taxon>
        <taxon>Thermococcaceae</taxon>
        <taxon>Pyrococcus</taxon>
    </lineage>
</organism>
<comment type="function">
    <text evidence="1">Regulatory subunit of DNA primase, an RNA polymerase that catalyzes the synthesis of short RNA molecules used as primers for DNA polymerase during DNA replication. Stabilizes and modulates the activity of the small subunit, increasing the rate of DNA synthesis, and conferring RNA synthesis capability. The DNA polymerase activity may enable DNA primase to also catalyze primer extension after primer synthesis. May also play a role in DNA repair.</text>
</comment>
<comment type="cofactor">
    <cofactor evidence="1">
        <name>[4Fe-4S] cluster</name>
        <dbReference type="ChEBI" id="CHEBI:49883"/>
    </cofactor>
    <text evidence="1">Binds 1 [4Fe-4S] cluster.</text>
</comment>
<comment type="subunit">
    <text evidence="1 2">Heterodimer of a small subunit (PriS) and a large subunit (PriL).</text>
</comment>
<comment type="similarity">
    <text evidence="1">Belongs to the eukaryotic-type primase large subunit family.</text>
</comment>
<comment type="sequence caution" evidence="3">
    <conflict type="erroneous initiation">
        <sequence resource="EMBL-CDS" id="BAA29265"/>
    </conflict>
    <text>Extended N-terminus.</text>
</comment>
<gene>
    <name evidence="1" type="primary">priL</name>
    <name type="synonym">priB</name>
    <name type="ordered locus">PH0196</name>
</gene>
<name>PRIL_PYRHO</name>
<protein>
    <recommendedName>
        <fullName evidence="1">DNA primase large subunit PriL</fullName>
    </recommendedName>
    <alternativeName>
        <fullName>DNA primase 46 kDa subunit</fullName>
        <shortName>p46</shortName>
    </alternativeName>
</protein>